<keyword id="KW-0547">Nucleotide-binding</keyword>
<keyword id="KW-0548">Nucleotidyltransferase</keyword>
<keyword id="KW-1185">Reference proteome</keyword>
<keyword id="KW-0696">RNA-directed RNA polymerase</keyword>
<keyword id="KW-0808">Transferase</keyword>
<keyword id="KW-0693">Viral RNA replication</keyword>
<name>RDRP_AMV</name>
<evidence type="ECO:0000250" key="1"/>
<evidence type="ECO:0000255" key="2">
    <source>
        <dbReference type="PROSITE-ProRule" id="PRU00539"/>
    </source>
</evidence>
<evidence type="ECO:0000256" key="3">
    <source>
        <dbReference type="SAM" id="MobiDB-lite"/>
    </source>
</evidence>
<evidence type="ECO:0000305" key="4"/>
<gene>
    <name type="ORF">ORF2a</name>
</gene>
<dbReference type="EC" id="2.7.7.48"/>
<dbReference type="EMBL" id="X01572">
    <property type="protein sequence ID" value="CAA25728.1"/>
    <property type="molecule type" value="Unassigned_RNA"/>
</dbReference>
<dbReference type="PIR" id="A04201">
    <property type="entry name" value="WMFM9"/>
</dbReference>
<dbReference type="RefSeq" id="YP_053235.1">
    <property type="nucleotide sequence ID" value="NC_002024.2"/>
</dbReference>
<dbReference type="KEGG" id="vg:962668"/>
<dbReference type="Proteomes" id="UP000000358">
    <property type="component" value="Genome"/>
</dbReference>
<dbReference type="GO" id="GO:0000166">
    <property type="term" value="F:nucleotide binding"/>
    <property type="evidence" value="ECO:0007669"/>
    <property type="project" value="UniProtKB-KW"/>
</dbReference>
<dbReference type="GO" id="GO:0003723">
    <property type="term" value="F:RNA binding"/>
    <property type="evidence" value="ECO:0007669"/>
    <property type="project" value="InterPro"/>
</dbReference>
<dbReference type="GO" id="GO:0003968">
    <property type="term" value="F:RNA-directed RNA polymerase activity"/>
    <property type="evidence" value="ECO:0007669"/>
    <property type="project" value="UniProtKB-KW"/>
</dbReference>
<dbReference type="GO" id="GO:0006351">
    <property type="term" value="P:DNA-templated transcription"/>
    <property type="evidence" value="ECO:0007669"/>
    <property type="project" value="InterPro"/>
</dbReference>
<dbReference type="GO" id="GO:0039690">
    <property type="term" value="P:positive stranded viral RNA replication"/>
    <property type="evidence" value="ECO:0007669"/>
    <property type="project" value="InterPro"/>
</dbReference>
<dbReference type="CDD" id="cd23252">
    <property type="entry name" value="Bromoviridae_RdRp"/>
    <property type="match status" value="1"/>
</dbReference>
<dbReference type="InterPro" id="IPR047309">
    <property type="entry name" value="Bromoviridae_RdRp"/>
</dbReference>
<dbReference type="InterPro" id="IPR043502">
    <property type="entry name" value="DNA/RNA_pol_sf"/>
</dbReference>
<dbReference type="InterPro" id="IPR001788">
    <property type="entry name" value="RNA-dep_RNA_pol_alsuvir"/>
</dbReference>
<dbReference type="InterPro" id="IPR007094">
    <property type="entry name" value="RNA-dir_pol_PSvirus"/>
</dbReference>
<dbReference type="Pfam" id="PF00978">
    <property type="entry name" value="RdRP_2"/>
    <property type="match status" value="1"/>
</dbReference>
<dbReference type="SUPFAM" id="SSF56672">
    <property type="entry name" value="DNA/RNA polymerases"/>
    <property type="match status" value="1"/>
</dbReference>
<dbReference type="PROSITE" id="PS50507">
    <property type="entry name" value="RDRP_SSRNA_POS"/>
    <property type="match status" value="1"/>
</dbReference>
<organism>
    <name type="scientific">Alfalfa mosaic virus</name>
    <name type="common">AMV</name>
    <dbReference type="NCBI Taxonomy" id="12321"/>
    <lineage>
        <taxon>Viruses</taxon>
        <taxon>Riboviria</taxon>
        <taxon>Orthornavirae</taxon>
        <taxon>Kitrinoviricota</taxon>
        <taxon>Alsuviricetes</taxon>
        <taxon>Martellivirales</taxon>
        <taxon>Bromoviridae</taxon>
        <taxon>Alfamovirus</taxon>
    </lineage>
</organism>
<sequence length="790" mass="89855">MFTLLRCLGFGVNEPTNTSSSEYVPEYSVEEISNEVAELDSVDPLFQCYKHVFVSLMLVRKMTQAAEDFLESFGGEFDSPCCRVYRLYRHFVNEDDAPAWAIPNVVNEDSYDDYAYLREELDAIDSSFELLNEERELSEITDRLNALRFFPVSKTEALPVANVQEVKLISETYQLLMTFINYSDENIPSEMPAPLLDELGMLPEELGPLNEIEDIKPVAAPITLLSEFRASDNAKPLDIVEIIPDVSPTKPYEAVISGNDWMTLGRIIPTTPVPTIRDVFFSGLSRHGSPEVIQNALDEFLPLHHSIDDKYFQEWVETSDKSLDVDPCRIDLSVFNNWQSSENCYEPRFKTGALSTRKGTQTEALLAIKKRNMNVPNLGQIYDVNSVANSVVNKLLTTVIDPDKLCMFPDFISEGEVSYFQDYIVGKNPDPELYSDPLGVRSIDSYKHMIKSVLKPVEDNSLHLERPMPATITYHDKDIVMSSSPIFLAAAARLMLILRDKITIPSGKFHQLFSIDAEAFDASFHFKEIDFSKFDKSQNELHHLIQERFLKYLGIPNEFLTLWFNAHRKSRISDSKNGVFFNVDFQRRTGDALTYLGNTIVTLACLCHVYDLMDPNVKFVVASGDDSLIGTVEELPRDQEFLFTTLFNLEAKFPHNQPFICSKFLITMPTTSGGKVVLPIPNPLKLLIRLGSKKVNADIFDEWYQSWIDIIGGFNDHHVIRCVAAMTAHRYLRRPSLYLEAALESLGKIFAGKTLCKECLFNEKHESNVKIKPRRVKKSHSDARSRARRA</sequence>
<proteinExistence type="inferred from homology"/>
<protein>
    <recommendedName>
        <fullName>RNA-directed RNA polymerase 2a</fullName>
        <shortName>protein 2a</shortName>
        <ecNumber>2.7.7.48</ecNumber>
    </recommendedName>
</protein>
<feature type="chain" id="PRO_0000083267" description="RNA-directed RNA polymerase 2a">
    <location>
        <begin position="1"/>
        <end position="790"/>
    </location>
</feature>
<feature type="domain" description="RdRp catalytic" evidence="2">
    <location>
        <begin position="524"/>
        <end position="639"/>
    </location>
</feature>
<feature type="region of interest" description="Disordered" evidence="3">
    <location>
        <begin position="771"/>
        <end position="790"/>
    </location>
</feature>
<feature type="compositionally biased region" description="Basic and acidic residues" evidence="3">
    <location>
        <begin position="779"/>
        <end position="790"/>
    </location>
</feature>
<reference key="1">
    <citation type="journal article" date="1983" name="Nucleic Acids Res.">
        <title>Complete nucleotide sequence of alfalfa mosaic virus RNA 2.</title>
        <authorList>
            <person name="Cornelissen B.J.C."/>
            <person name="Brederode F.T."/>
            <person name="Veeneman G.H."/>
            <person name="van Boom J.H."/>
            <person name="Bol J.F."/>
        </authorList>
    </citation>
    <scope>NUCLEOTIDE SEQUENCE</scope>
</reference>
<comment type="function">
    <text evidence="4">RNA-dependent RNA polymerase which replicates the viral genome composed of 3 RNA segments, RNA1, RNA2 and RNA3.</text>
</comment>
<comment type="catalytic activity">
    <reaction evidence="2">
        <text>RNA(n) + a ribonucleoside 5'-triphosphate = RNA(n+1) + diphosphate</text>
        <dbReference type="Rhea" id="RHEA:21248"/>
        <dbReference type="Rhea" id="RHEA-COMP:14527"/>
        <dbReference type="Rhea" id="RHEA-COMP:17342"/>
        <dbReference type="ChEBI" id="CHEBI:33019"/>
        <dbReference type="ChEBI" id="CHEBI:61557"/>
        <dbReference type="ChEBI" id="CHEBI:140395"/>
        <dbReference type="EC" id="2.7.7.48"/>
    </reaction>
</comment>
<comment type="subunit">
    <text evidence="1">Interacts with replication protein 1a.</text>
</comment>
<comment type="similarity">
    <text evidence="4">Belongs to the bromoviridae 2a family.</text>
</comment>
<accession>P03593</accession>